<gene>
    <name evidence="1" type="primary">CHTF8</name>
    <name type="synonym">CTF8</name>
</gene>
<accession>P0CG11</accession>
<accession>A8E4M1</accession>
<accession>P0C6S9</accession>
<keyword id="KW-0131">Cell cycle</keyword>
<keyword id="KW-0235">DNA replication</keyword>
<keyword id="KW-0238">DNA-binding</keyword>
<keyword id="KW-0539">Nucleus</keyword>
<keyword id="KW-1185">Reference proteome</keyword>
<dbReference type="EMBL" id="AAFC03016849">
    <property type="status" value="NOT_ANNOTATED_CDS"/>
    <property type="molecule type" value="Genomic_DNA"/>
</dbReference>
<dbReference type="RefSeq" id="NP_001108441.1">
    <property type="nucleotide sequence ID" value="NM_001114969.2"/>
</dbReference>
<dbReference type="RefSeq" id="XP_005218793.1">
    <property type="nucleotide sequence ID" value="XM_005218736.3"/>
</dbReference>
<dbReference type="SMR" id="P0CG11"/>
<dbReference type="FunCoup" id="P0CG11">
    <property type="interactions" value="3453"/>
</dbReference>
<dbReference type="PaxDb" id="9913-ENSBTAP00000002226"/>
<dbReference type="GeneID" id="618186"/>
<dbReference type="KEGG" id="bta:618186"/>
<dbReference type="CTD" id="54921"/>
<dbReference type="VEuPathDB" id="HostDB:ENSBTAG00000001698"/>
<dbReference type="eggNOG" id="ENOG502S2DB">
    <property type="taxonomic scope" value="Eukaryota"/>
</dbReference>
<dbReference type="HOGENOM" id="CLU_066293_3_0_1"/>
<dbReference type="InParanoid" id="P0CG11"/>
<dbReference type="OrthoDB" id="9833216at2759"/>
<dbReference type="TreeFam" id="TF314676"/>
<dbReference type="Reactome" id="R-BTA-174411">
    <property type="pathway name" value="Polymerase switching on the C-strand of the telomere"/>
</dbReference>
<dbReference type="Proteomes" id="UP000009136">
    <property type="component" value="Chromosome 18"/>
</dbReference>
<dbReference type="Bgee" id="ENSBTAG00000001698">
    <property type="expression patterns" value="Expressed in myometrium and 104 other cell types or tissues"/>
</dbReference>
<dbReference type="GO" id="GO:0031390">
    <property type="term" value="C:Ctf18 RFC-like complex"/>
    <property type="evidence" value="ECO:0000250"/>
    <property type="project" value="UniProtKB"/>
</dbReference>
<dbReference type="GO" id="GO:0003677">
    <property type="term" value="F:DNA binding"/>
    <property type="evidence" value="ECO:0007669"/>
    <property type="project" value="UniProtKB-KW"/>
</dbReference>
<dbReference type="GO" id="GO:0006260">
    <property type="term" value="P:DNA replication"/>
    <property type="evidence" value="ECO:0007669"/>
    <property type="project" value="UniProtKB-KW"/>
</dbReference>
<dbReference type="GO" id="GO:0007064">
    <property type="term" value="P:mitotic sister chromatid cohesion"/>
    <property type="evidence" value="ECO:0007669"/>
    <property type="project" value="InterPro"/>
</dbReference>
<dbReference type="GO" id="GO:1900264">
    <property type="term" value="P:positive regulation of DNA-directed DNA polymerase activity"/>
    <property type="evidence" value="ECO:0000250"/>
    <property type="project" value="UniProtKB"/>
</dbReference>
<dbReference type="InterPro" id="IPR018607">
    <property type="entry name" value="Ctf8"/>
</dbReference>
<dbReference type="PANTHER" id="PTHR28605:SF3">
    <property type="entry name" value="CHROMOSOME TRANSMISSION FIDELITY PROTEIN 8 HOMOLOG"/>
    <property type="match status" value="1"/>
</dbReference>
<dbReference type="PANTHER" id="PTHR28605">
    <property type="entry name" value="CTF8, CHROMOSOME TRANSMISSION FIDELITY FACTOR 8 HOMOLOG (S. CEREVISIAE)"/>
    <property type="match status" value="1"/>
</dbReference>
<dbReference type="Pfam" id="PF09696">
    <property type="entry name" value="Ctf8"/>
    <property type="match status" value="1"/>
</dbReference>
<organism>
    <name type="scientific">Bos taurus</name>
    <name type="common">Bovine</name>
    <dbReference type="NCBI Taxonomy" id="9913"/>
    <lineage>
        <taxon>Eukaryota</taxon>
        <taxon>Metazoa</taxon>
        <taxon>Chordata</taxon>
        <taxon>Craniata</taxon>
        <taxon>Vertebrata</taxon>
        <taxon>Euteleostomi</taxon>
        <taxon>Mammalia</taxon>
        <taxon>Eutheria</taxon>
        <taxon>Laurasiatheria</taxon>
        <taxon>Artiodactyla</taxon>
        <taxon>Ruminantia</taxon>
        <taxon>Pecora</taxon>
        <taxon>Bovidae</taxon>
        <taxon>Bovinae</taxon>
        <taxon>Bos</taxon>
    </lineage>
</organism>
<name>CTF8_BOVIN</name>
<sequence>MVQIVISSAGAGGLAEWVLMELQGEIEARHSTGLAGNLLGDLHYTTEGIPVLIVGHHILYGKIIHLEKPFAVLVKHTPGEQDCDELGCESGTRYLVTALIKNKILFKTRPKPIITNVPKKV</sequence>
<evidence type="ECO:0000250" key="1">
    <source>
        <dbReference type="UniProtKB" id="P0CG13"/>
    </source>
</evidence>
<evidence type="ECO:0000305" key="2"/>
<reference key="1">
    <citation type="journal article" date="2009" name="Science">
        <title>The genome sequence of taurine cattle: a window to ruminant biology and evolution.</title>
        <authorList>
            <consortium name="The bovine genome sequencing and analysis consortium"/>
        </authorList>
    </citation>
    <scope>NUCLEOTIDE SEQUENCE [LARGE SCALE GENOMIC DNA]</scope>
    <source>
        <strain>Hereford</strain>
    </source>
</reference>
<protein>
    <recommendedName>
        <fullName evidence="1">Chromosome transmission fidelity protein 8 homolog</fullName>
    </recommendedName>
</protein>
<feature type="chain" id="PRO_0000327252" description="Chromosome transmission fidelity protein 8 homolog">
    <location>
        <begin position="1"/>
        <end position="121"/>
    </location>
</feature>
<comment type="function">
    <text evidence="1">Chromosome cohesion factor involved in sister chromatid cohesion and fidelity of chromosome transmission. Component of one of the cell nuclear antigen loader complexes, CTF18-replication factor C (CTF18-RFC), which consists of CTF18, CTF8, DSCC1, RFC2, RFC3, RFC4 and RFC5. The CTF18-RFC complex binds to single-stranded and primed DNAs and has weak ATPase activity that is stimulated the presence of primed DNA, replication protein A (RPA) and proliferating cell nuclear antigen (PCNA). The CTF18-RFC complex catalyzes the ATP-dependent loading of PCNA onto primed and gapped DNA. It also interacts with and stimulates POLH, which is suggestive of a protein network that coordinates DNA repair, recombination and chromosome cohesion reactions with replication fork progression (By similarity).</text>
</comment>
<comment type="subunit">
    <text evidence="1">Component of the CTF18-RFC complex, which consists of CTF18, CTF8, DSCC1, RFC2, RFC3, RFC4 and RFC5. The CTF18-RFC complex does not interact with the Rad9/Rad1/Hus1 complex. The CTF18-RFC complex interacts with POLH. CTF18/CTF8/DSCC1 associate with PCNA. CTF8 exists as a dimer with DSCC1 (By similarity).</text>
</comment>
<comment type="subcellular location">
    <subcellularLocation>
        <location evidence="1">Nucleus</location>
    </subcellularLocation>
    <text evidence="1">Associates with chromatin during S phase.</text>
</comment>
<comment type="similarity">
    <text evidence="2">Belongs to the CTF8 family.</text>
</comment>
<proteinExistence type="inferred from homology"/>